<comment type="function">
    <text>Thick filament-associated protein located in the crossbridge region of vertebrate striated muscle a bands. In vitro it binds MHC, F-actin and native thin filaments, and modifies the activity of actin-activated myosin ATPase. It may modulate muscle contraction or may play a more structural role.</text>
</comment>
<comment type="similarity">
    <text evidence="4">Belongs to the immunoglobulin superfamily. MyBP family.</text>
</comment>
<protein>
    <recommendedName>
        <fullName>Myosin-binding protein C, fast-type</fullName>
        <shortName>Fast MyBP-C</shortName>
    </recommendedName>
    <alternativeName>
        <fullName>C-protein, skeletal muscle fast isoform</fullName>
    </alternativeName>
</protein>
<name>MYPC2_CHICK</name>
<evidence type="ECO:0000255" key="1">
    <source>
        <dbReference type="PROSITE-ProRule" id="PRU00316"/>
    </source>
</evidence>
<evidence type="ECO:0000256" key="2">
    <source>
        <dbReference type="SAM" id="MobiDB-lite"/>
    </source>
</evidence>
<evidence type="ECO:0000269" key="3">
    <source>
    </source>
</evidence>
<evidence type="ECO:0000305" key="4"/>
<keyword id="KW-0009">Actin-binding</keyword>
<keyword id="KW-0130">Cell adhesion</keyword>
<keyword id="KW-0903">Direct protein sequencing</keyword>
<keyword id="KW-0393">Immunoglobulin domain</keyword>
<keyword id="KW-0514">Muscle protein</keyword>
<keyword id="KW-1185">Reference proteome</keyword>
<keyword id="KW-0677">Repeat</keyword>
<keyword id="KW-0787">Thick filament</keyword>
<dbReference type="EMBL" id="U00922">
    <property type="protein sequence ID" value="AAC59644.1"/>
    <property type="molecule type" value="mRNA"/>
</dbReference>
<dbReference type="EMBL" id="U00923">
    <property type="protein sequence ID" value="AAC04307.1"/>
    <property type="molecule type" value="mRNA"/>
</dbReference>
<dbReference type="EMBL" id="M31209">
    <property type="protein sequence ID" value="AAA49068.1"/>
    <property type="molecule type" value="mRNA"/>
</dbReference>
<dbReference type="PIR" id="A48668">
    <property type="entry name" value="A35089"/>
</dbReference>
<dbReference type="RefSeq" id="NP_001038124.1">
    <property type="nucleotide sequence ID" value="NM_001044659.1"/>
</dbReference>
<dbReference type="SMR" id="P16419"/>
<dbReference type="FunCoup" id="P16419">
    <property type="interactions" value="4"/>
</dbReference>
<dbReference type="STRING" id="9031.ENSGALP00000067253"/>
<dbReference type="GlyGen" id="P16419">
    <property type="glycosylation" value="1 site"/>
</dbReference>
<dbReference type="GeneID" id="425457"/>
<dbReference type="CTD" id="4606"/>
<dbReference type="VEuPathDB" id="HostDB:geneid_425457"/>
<dbReference type="InParanoid" id="P16419"/>
<dbReference type="OMA" id="YEHSRHT"/>
<dbReference type="OrthoDB" id="6107607at2759"/>
<dbReference type="PhylomeDB" id="P16419"/>
<dbReference type="PRO" id="PR:P16419"/>
<dbReference type="Proteomes" id="UP000000539">
    <property type="component" value="Unassembled WGS sequence"/>
</dbReference>
<dbReference type="GO" id="GO:0031672">
    <property type="term" value="C:A band"/>
    <property type="evidence" value="ECO:0000314"/>
    <property type="project" value="AgBase"/>
</dbReference>
<dbReference type="GO" id="GO:0014705">
    <property type="term" value="C:C zone"/>
    <property type="evidence" value="ECO:0000314"/>
    <property type="project" value="UniProtKB"/>
</dbReference>
<dbReference type="GO" id="GO:0031430">
    <property type="term" value="C:M band"/>
    <property type="evidence" value="ECO:0000318"/>
    <property type="project" value="GO_Central"/>
</dbReference>
<dbReference type="GO" id="GO:0032982">
    <property type="term" value="C:myosin filament"/>
    <property type="evidence" value="ECO:0007669"/>
    <property type="project" value="UniProtKB-KW"/>
</dbReference>
<dbReference type="GO" id="GO:0003779">
    <property type="term" value="F:actin binding"/>
    <property type="evidence" value="ECO:0007669"/>
    <property type="project" value="UniProtKB-KW"/>
</dbReference>
<dbReference type="GO" id="GO:0007155">
    <property type="term" value="P:cell adhesion"/>
    <property type="evidence" value="ECO:0007669"/>
    <property type="project" value="UniProtKB-KW"/>
</dbReference>
<dbReference type="GO" id="GO:0045214">
    <property type="term" value="P:sarcomere organization"/>
    <property type="evidence" value="ECO:0000318"/>
    <property type="project" value="GO_Central"/>
</dbReference>
<dbReference type="GO" id="GO:0030241">
    <property type="term" value="P:skeletal muscle myosin thick filament assembly"/>
    <property type="evidence" value="ECO:0000314"/>
    <property type="project" value="UniProtKB"/>
</dbReference>
<dbReference type="CDD" id="cd00063">
    <property type="entry name" value="FN3"/>
    <property type="match status" value="3"/>
</dbReference>
<dbReference type="CDD" id="cd00096">
    <property type="entry name" value="Ig"/>
    <property type="match status" value="2"/>
</dbReference>
<dbReference type="CDD" id="cd05894">
    <property type="entry name" value="Ig_C5_MyBP-C"/>
    <property type="match status" value="1"/>
</dbReference>
<dbReference type="CDD" id="cd05748">
    <property type="entry name" value="Ig_Titin_like"/>
    <property type="match status" value="1"/>
</dbReference>
<dbReference type="FunFam" id="2.60.40.10:FF:000646">
    <property type="entry name" value="Myosin binding protein C, fast type"/>
    <property type="match status" value="1"/>
</dbReference>
<dbReference type="FunFam" id="2.60.40.10:FF:001216">
    <property type="entry name" value="Myosin binding protein C, fast type"/>
    <property type="match status" value="1"/>
</dbReference>
<dbReference type="FunFam" id="2.60.40.10:FF:000225">
    <property type="entry name" value="Myosin-binding protein C, cardiac-type"/>
    <property type="match status" value="1"/>
</dbReference>
<dbReference type="FunFam" id="2.60.40.10:FF:000326">
    <property type="entry name" value="Myosin-binding protein C, cardiac-type"/>
    <property type="match status" value="1"/>
</dbReference>
<dbReference type="FunFam" id="2.60.40.10:FF:000031">
    <property type="entry name" value="Myosin-binding protein C, slow type"/>
    <property type="match status" value="1"/>
</dbReference>
<dbReference type="FunFam" id="2.60.40.10:FF:000060">
    <property type="entry name" value="Myosin-binding protein C, slow type"/>
    <property type="match status" value="1"/>
</dbReference>
<dbReference type="FunFam" id="2.60.40.10:FF:000062">
    <property type="entry name" value="Myosin-binding protein C, slow type"/>
    <property type="match status" value="1"/>
</dbReference>
<dbReference type="FunFam" id="2.60.40.10:FF:000070">
    <property type="entry name" value="Myosin-binding protein C, slow type"/>
    <property type="match status" value="1"/>
</dbReference>
<dbReference type="FunFam" id="2.60.40.10:FF:000081">
    <property type="entry name" value="Myosin-binding protein C, slow type"/>
    <property type="match status" value="1"/>
</dbReference>
<dbReference type="FunFam" id="2.60.40.10:FF:000085">
    <property type="entry name" value="Myosin-binding protein C, slow type"/>
    <property type="match status" value="1"/>
</dbReference>
<dbReference type="Gene3D" id="2.60.40.10">
    <property type="entry name" value="Immunoglobulins"/>
    <property type="match status" value="10"/>
</dbReference>
<dbReference type="InterPro" id="IPR003961">
    <property type="entry name" value="FN3_dom"/>
</dbReference>
<dbReference type="InterPro" id="IPR036116">
    <property type="entry name" value="FN3_sf"/>
</dbReference>
<dbReference type="InterPro" id="IPR007110">
    <property type="entry name" value="Ig-like_dom"/>
</dbReference>
<dbReference type="InterPro" id="IPR036179">
    <property type="entry name" value="Ig-like_dom_sf"/>
</dbReference>
<dbReference type="InterPro" id="IPR013783">
    <property type="entry name" value="Ig-like_fold"/>
</dbReference>
<dbReference type="InterPro" id="IPR013098">
    <property type="entry name" value="Ig_I-set"/>
</dbReference>
<dbReference type="InterPro" id="IPR003599">
    <property type="entry name" value="Ig_sub"/>
</dbReference>
<dbReference type="InterPro" id="IPR003598">
    <property type="entry name" value="Ig_sub2"/>
</dbReference>
<dbReference type="InterPro" id="IPR040849">
    <property type="entry name" value="MyBP-C_THB"/>
</dbReference>
<dbReference type="InterPro" id="IPR050964">
    <property type="entry name" value="Striated_Muscle_Regulatory"/>
</dbReference>
<dbReference type="PANTHER" id="PTHR13817">
    <property type="entry name" value="TITIN"/>
    <property type="match status" value="1"/>
</dbReference>
<dbReference type="PANTHER" id="PTHR13817:SF164">
    <property type="entry name" value="ZORMIN, ISOFORM J"/>
    <property type="match status" value="1"/>
</dbReference>
<dbReference type="Pfam" id="PF00041">
    <property type="entry name" value="fn3"/>
    <property type="match status" value="3"/>
</dbReference>
<dbReference type="Pfam" id="PF07679">
    <property type="entry name" value="I-set"/>
    <property type="match status" value="7"/>
</dbReference>
<dbReference type="Pfam" id="PF18362">
    <property type="entry name" value="THB"/>
    <property type="match status" value="1"/>
</dbReference>
<dbReference type="PRINTS" id="PR00014">
    <property type="entry name" value="FNTYPEIII"/>
</dbReference>
<dbReference type="SMART" id="SM00060">
    <property type="entry name" value="FN3"/>
    <property type="match status" value="3"/>
</dbReference>
<dbReference type="SMART" id="SM00409">
    <property type="entry name" value="IG"/>
    <property type="match status" value="7"/>
</dbReference>
<dbReference type="SMART" id="SM00408">
    <property type="entry name" value="IGc2"/>
    <property type="match status" value="5"/>
</dbReference>
<dbReference type="SUPFAM" id="SSF49265">
    <property type="entry name" value="Fibronectin type III"/>
    <property type="match status" value="2"/>
</dbReference>
<dbReference type="SUPFAM" id="SSF48726">
    <property type="entry name" value="Immunoglobulin"/>
    <property type="match status" value="7"/>
</dbReference>
<dbReference type="PROSITE" id="PS50853">
    <property type="entry name" value="FN3"/>
    <property type="match status" value="3"/>
</dbReference>
<dbReference type="PROSITE" id="PS50835">
    <property type="entry name" value="IG_LIKE"/>
    <property type="match status" value="5"/>
</dbReference>
<reference key="1">
    <citation type="journal article" date="1993" name="J. Cell Biol.">
        <title>The major myosin-binding domain of skeletal muscle MyBP-C (C protein) resides in the COOH-terminal, immunoglobulin C2 motif.</title>
        <authorList>
            <person name="Okagaki T."/>
            <person name="Weber F.E."/>
            <person name="Fischman D.A."/>
            <person name="Vaughan K.T."/>
            <person name="Mikawa T."/>
            <person name="Reinach F.C."/>
        </authorList>
    </citation>
    <scope>NUCLEOTIDE SEQUENCE [MRNA]</scope>
    <scope>PROTEIN SEQUENCE OF 2-25; 183-199 AND 1031-1045</scope>
    <source>
        <tissue>Skeletal muscle</tissue>
    </source>
</reference>
<reference key="2">
    <citation type="journal article" date="1990" name="Proc. Natl. Acad. Sci. U.S.A.">
        <title>Isolation and characterization of a cDNA clone encoding avian skeletal muscle C-protein: an intracellular member of the immunoglobulin superfamily.</title>
        <authorList>
            <person name="Einheber S."/>
            <person name="Fischman D.A."/>
        </authorList>
    </citation>
    <scope>NUCLEOTIDE SEQUENCE [MRNA] OF 140-1132</scope>
    <source>
        <tissue>Skeletal muscle</tissue>
    </source>
</reference>
<organism>
    <name type="scientific">Gallus gallus</name>
    <name type="common">Chicken</name>
    <dbReference type="NCBI Taxonomy" id="9031"/>
    <lineage>
        <taxon>Eukaryota</taxon>
        <taxon>Metazoa</taxon>
        <taxon>Chordata</taxon>
        <taxon>Craniata</taxon>
        <taxon>Vertebrata</taxon>
        <taxon>Euteleostomi</taxon>
        <taxon>Archelosauria</taxon>
        <taxon>Archosauria</taxon>
        <taxon>Dinosauria</taxon>
        <taxon>Saurischia</taxon>
        <taxon>Theropoda</taxon>
        <taxon>Coelurosauria</taxon>
        <taxon>Aves</taxon>
        <taxon>Neognathae</taxon>
        <taxon>Galloanserae</taxon>
        <taxon>Galliformes</taxon>
        <taxon>Phasianidae</taxon>
        <taxon>Phasianinae</taxon>
        <taxon>Gallus</taxon>
    </lineage>
</organism>
<proteinExistence type="evidence at protein level"/>
<feature type="initiator methionine" description="Removed" evidence="3">
    <location>
        <position position="1"/>
    </location>
</feature>
<feature type="chain" id="PRO_0000072692" description="Myosin-binding protein C, fast-type">
    <location>
        <begin position="2"/>
        <end position="1132"/>
    </location>
</feature>
<feature type="domain" description="Ig-like C2-type 1">
    <location>
        <begin position="48"/>
        <end position="149"/>
    </location>
</feature>
<feature type="domain" description="Ig-like C2-type 2">
    <location>
        <begin position="249"/>
        <end position="338"/>
    </location>
</feature>
<feature type="domain" description="Ig-like C2-type 3">
    <location>
        <begin position="339"/>
        <end position="429"/>
    </location>
</feature>
<feature type="domain" description="Ig-like C2-type 4">
    <location>
        <begin position="430"/>
        <end position="530"/>
    </location>
</feature>
<feature type="domain" description="Ig-like C2-type 5">
    <location>
        <begin position="531"/>
        <end position="630"/>
    </location>
</feature>
<feature type="domain" description="Fibronectin type-III 1" evidence="1">
    <location>
        <begin position="633"/>
        <end position="729"/>
    </location>
</feature>
<feature type="domain" description="Fibronectin type-III 2" evidence="1">
    <location>
        <begin position="731"/>
        <end position="826"/>
    </location>
</feature>
<feature type="domain" description="Ig-like C2-type 6">
    <location>
        <begin position="830"/>
        <end position="923"/>
    </location>
</feature>
<feature type="domain" description="Fibronectin type-III 3" evidence="1">
    <location>
        <begin position="926"/>
        <end position="1022"/>
    </location>
</feature>
<feature type="domain" description="Ig-like C2-type 7">
    <location>
        <begin position="1039"/>
        <end position="1132"/>
    </location>
</feature>
<feature type="region of interest" description="Disordered" evidence="2">
    <location>
        <begin position="1"/>
        <end position="59"/>
    </location>
</feature>
<feature type="compositionally biased region" description="Basic and acidic residues" evidence="2">
    <location>
        <begin position="9"/>
        <end position="44"/>
    </location>
</feature>
<accession>P16419</accession>
<accession>Q90606</accession>
<sequence length="1132" mass="126943">MPEPSKAAPKKEAKKKEEKKEEKKEAPPPQEHKDEAPDDVHPPETPDPEGLFLSKPQNVMVESGRDVTVSARVAGAALPCAPAVKWFKGKWAELGDKSARCRLRHSVDDDKVHTFELTITKVAMGDRGDYRCEVTAKEQKDSCSFSIDVEAPRSSEGNVLQAFKRTGEGKDDTAGELDFSGLLKKREVQVEEKKKKKDEDDQFPPEIWELLKGVTKKSEYERIAFQYGITDLRGMLKRLKKVHVEPKKSEAFIRKLDPAYQVDKGNKIKLVVELSDPDLPLKWYKNGQLLKPSTKYVFENVGLKRILTIHKCSLADDAAYECRVNDEKCFTEVFVKEPPVTVVRGLEDQQVVVGDRVVLEAEVSEEGAQVMWLKDGVDVTRDDAFKYRFKKDGKKHFLIINEAELSDSAHYKIMTNGGESEAELSVEEKQLEVLQDMADLTVKASEQAVFKCEVSDEKVTGRWFRNGVEVKPSKRIHISHNGRFHKLVIDDVRPEDEGDYTFIPDGYALSLSAKLNFLEIKVEYVPKQEPPKIHLDCSGKAAENTIVVVAGNKVRLDVPISGEPAPTVTWKRGDQLFTATEGRVHIDSQADLSSFVIESAERSDEGRYCITVTNPVGEDSATLHVRVVDVPDPPQSVRVTSVGEDWAVLSWEAPPFDGGMPITGYLMERKKKGSMRWMKLNFEVFPDTTYESTKMIEGVFYEMRVFAVNAIGVSQPSLNTQPFMPIAPTSEPTHVVLEDVTDTTATIKWRPPERIGAGGVDGYLVEWCREGSNEWVAANTELVERCGLTARGLPTGERLLFRVISVNMAGKSPPATMAQPVTIREIVERPKIRLPRHLRQTYIRRVGEQVNLVIPFQGKPRPQVTWSREGGALPAEVQTRTSDVDSVFFIRSAARPLSGNYEMRVRIDNMEDCATLRLRVVERPGPPQAVRVMEVWGSNALLQWEPPKDDGNAEISGYTVQKADTRTMEWFTVLEHSRPTRCTVSELVMGNEYRFRVYSENVCGTSQEPATSHNTARIAKEGLTLKMVPYKERDLRAAPQFLTPLVDRSVVAGYTVTLNCAVRGHPKPKVTWLKNSVEIGADPKFLSRHGLGVLSLLIRRPGPFDGGTYGCRAVNEMGEATTECRLDVRVPQ</sequence>
<gene>
    <name type="primary">MYBPC2</name>
</gene>